<organism>
    <name type="scientific">Polaromonas naphthalenivorans (strain CJ2)</name>
    <dbReference type="NCBI Taxonomy" id="365044"/>
    <lineage>
        <taxon>Bacteria</taxon>
        <taxon>Pseudomonadati</taxon>
        <taxon>Pseudomonadota</taxon>
        <taxon>Betaproteobacteria</taxon>
        <taxon>Burkholderiales</taxon>
        <taxon>Comamonadaceae</taxon>
        <taxon>Polaromonas</taxon>
    </lineage>
</organism>
<evidence type="ECO:0000255" key="1">
    <source>
        <dbReference type="HAMAP-Rule" id="MF_00270"/>
    </source>
</evidence>
<evidence type="ECO:0000305" key="2"/>
<comment type="function">
    <text evidence="1">Binds as a heterodimer with protein bS6 to the central domain of the 16S rRNA, where it helps stabilize the platform of the 30S subunit.</text>
</comment>
<comment type="subunit">
    <text evidence="1">Part of the 30S ribosomal subunit. Forms a tight heterodimer with protein bS6.</text>
</comment>
<comment type="similarity">
    <text evidence="1">Belongs to the bacterial ribosomal protein bS18 family.</text>
</comment>
<protein>
    <recommendedName>
        <fullName evidence="1">Small ribosomal subunit protein bS18</fullName>
    </recommendedName>
    <alternativeName>
        <fullName evidence="2">30S ribosomal protein S18</fullName>
    </alternativeName>
</protein>
<sequence>MAGPKRFNKDKRPKRNTQSLLFKRKRFCRFTAAGVEEIDYKDIDTLRDFVSENGKIIPARLTGTRAIFQRQINTAVKRARFLAMLPYSDQHRSL</sequence>
<gene>
    <name evidence="1" type="primary">rpsR</name>
    <name type="ordered locus">Pnap_2393</name>
</gene>
<accession>A1VPX2</accession>
<reference key="1">
    <citation type="journal article" date="2009" name="Environ. Microbiol.">
        <title>The genome of Polaromonas naphthalenivorans strain CJ2, isolated from coal tar-contaminated sediment, reveals physiological and metabolic versatility and evolution through extensive horizontal gene transfer.</title>
        <authorList>
            <person name="Yagi J.M."/>
            <person name="Sims D."/>
            <person name="Brettin T."/>
            <person name="Bruce D."/>
            <person name="Madsen E.L."/>
        </authorList>
    </citation>
    <scope>NUCLEOTIDE SEQUENCE [LARGE SCALE GENOMIC DNA]</scope>
    <source>
        <strain>CJ2</strain>
    </source>
</reference>
<feature type="chain" id="PRO_1000003555" description="Small ribosomal subunit protein bS18">
    <location>
        <begin position="1"/>
        <end position="94"/>
    </location>
</feature>
<dbReference type="EMBL" id="CP000529">
    <property type="protein sequence ID" value="ABM37700.1"/>
    <property type="molecule type" value="Genomic_DNA"/>
</dbReference>
<dbReference type="RefSeq" id="WP_011801778.1">
    <property type="nucleotide sequence ID" value="NC_008781.1"/>
</dbReference>
<dbReference type="SMR" id="A1VPX2"/>
<dbReference type="STRING" id="365044.Pnap_2393"/>
<dbReference type="KEGG" id="pna:Pnap_2393"/>
<dbReference type="eggNOG" id="COG0238">
    <property type="taxonomic scope" value="Bacteria"/>
</dbReference>
<dbReference type="HOGENOM" id="CLU_148710_0_3_4"/>
<dbReference type="OrthoDB" id="9812008at2"/>
<dbReference type="Proteomes" id="UP000000644">
    <property type="component" value="Chromosome"/>
</dbReference>
<dbReference type="GO" id="GO:0022627">
    <property type="term" value="C:cytosolic small ribosomal subunit"/>
    <property type="evidence" value="ECO:0007669"/>
    <property type="project" value="TreeGrafter"/>
</dbReference>
<dbReference type="GO" id="GO:0070181">
    <property type="term" value="F:small ribosomal subunit rRNA binding"/>
    <property type="evidence" value="ECO:0007669"/>
    <property type="project" value="TreeGrafter"/>
</dbReference>
<dbReference type="GO" id="GO:0003735">
    <property type="term" value="F:structural constituent of ribosome"/>
    <property type="evidence" value="ECO:0007669"/>
    <property type="project" value="InterPro"/>
</dbReference>
<dbReference type="GO" id="GO:0006412">
    <property type="term" value="P:translation"/>
    <property type="evidence" value="ECO:0007669"/>
    <property type="project" value="UniProtKB-UniRule"/>
</dbReference>
<dbReference type="Gene3D" id="4.10.640.10">
    <property type="entry name" value="Ribosomal protein S18"/>
    <property type="match status" value="1"/>
</dbReference>
<dbReference type="HAMAP" id="MF_00270">
    <property type="entry name" value="Ribosomal_bS18"/>
    <property type="match status" value="1"/>
</dbReference>
<dbReference type="InterPro" id="IPR001648">
    <property type="entry name" value="Ribosomal_bS18"/>
</dbReference>
<dbReference type="InterPro" id="IPR018275">
    <property type="entry name" value="Ribosomal_bS18_CS"/>
</dbReference>
<dbReference type="InterPro" id="IPR036870">
    <property type="entry name" value="Ribosomal_bS18_sf"/>
</dbReference>
<dbReference type="NCBIfam" id="TIGR00165">
    <property type="entry name" value="S18"/>
    <property type="match status" value="1"/>
</dbReference>
<dbReference type="PANTHER" id="PTHR13479">
    <property type="entry name" value="30S RIBOSOMAL PROTEIN S18"/>
    <property type="match status" value="1"/>
</dbReference>
<dbReference type="PANTHER" id="PTHR13479:SF40">
    <property type="entry name" value="SMALL RIBOSOMAL SUBUNIT PROTEIN BS18M"/>
    <property type="match status" value="1"/>
</dbReference>
<dbReference type="Pfam" id="PF01084">
    <property type="entry name" value="Ribosomal_S18"/>
    <property type="match status" value="1"/>
</dbReference>
<dbReference type="PRINTS" id="PR00974">
    <property type="entry name" value="RIBOSOMALS18"/>
</dbReference>
<dbReference type="SUPFAM" id="SSF46911">
    <property type="entry name" value="Ribosomal protein S18"/>
    <property type="match status" value="1"/>
</dbReference>
<dbReference type="PROSITE" id="PS00057">
    <property type="entry name" value="RIBOSOMAL_S18"/>
    <property type="match status" value="1"/>
</dbReference>
<name>RS18_POLNA</name>
<proteinExistence type="inferred from homology"/>
<keyword id="KW-1185">Reference proteome</keyword>
<keyword id="KW-0687">Ribonucleoprotein</keyword>
<keyword id="KW-0689">Ribosomal protein</keyword>
<keyword id="KW-0694">RNA-binding</keyword>
<keyword id="KW-0699">rRNA-binding</keyword>